<sequence>MVSPDDSPEIRDRPRPRRCLLPASVTVEPVIFLSMFALALQGPLATQYLWDRLSADIGFNGTRTVGCAMNGSKSAGPEQQEVETLTAHWSLYINLGGFLVGLFSVMLLGPWSDKVGRRPVLMLPCIGLALQAAVYLLVMYQELHVGYFLIGRFISGISGDFNMILAGCFAYIADVSDRQSRTFRVAVLEACLGIAGMVASIIGGHWRKAQGYINPFWLVFAVNLFTALYVYFCVEESVKDKKPARLFTHRHYQSFFRLFTVQGENNRRRKLFLYSLALLVVVTVHMGAKNLFVLYELSYPLCWDSDLIGYGSAAEHLTYLSSLAGLRLFQLCLADSWVAEMGFISNISGLVVISLASTTPIMFTGYGLRFFAMATTPVIRSKLSKMVEEGEQGALFSSVACVEGLSFLLATGLFNSLYPATLHFMKGFPFLLGALLLLIPAGIIGLIEVCEQKPMYSQFSEIS</sequence>
<organism>
    <name type="scientific">Xenopus laevis</name>
    <name type="common">African clawed frog</name>
    <dbReference type="NCBI Taxonomy" id="8355"/>
    <lineage>
        <taxon>Eukaryota</taxon>
        <taxon>Metazoa</taxon>
        <taxon>Chordata</taxon>
        <taxon>Craniata</taxon>
        <taxon>Vertebrata</taxon>
        <taxon>Euteleostomi</taxon>
        <taxon>Amphibia</taxon>
        <taxon>Batrachia</taxon>
        <taxon>Anura</taxon>
        <taxon>Pipoidea</taxon>
        <taxon>Pipidae</taxon>
        <taxon>Xenopodinae</taxon>
        <taxon>Xenopus</taxon>
        <taxon>Xenopus</taxon>
    </lineage>
</organism>
<evidence type="ECO:0000250" key="1">
    <source>
        <dbReference type="UniProtKB" id="F1NJ67"/>
    </source>
</evidence>
<evidence type="ECO:0000250" key="2">
    <source>
        <dbReference type="UniProtKB" id="Q6PEM8"/>
    </source>
</evidence>
<evidence type="ECO:0000250" key="3">
    <source>
        <dbReference type="UniProtKB" id="Q96NT5"/>
    </source>
</evidence>
<evidence type="ECO:0000255" key="4"/>
<evidence type="ECO:0000269" key="5">
    <source>
    </source>
</evidence>
<evidence type="ECO:0000303" key="6">
    <source>
    </source>
</evidence>
<evidence type="ECO:0000305" key="7"/>
<feature type="chain" id="PRO_0000084855" description="Proton-coupled folate transporter">
    <location>
        <begin position="1"/>
        <end position="463"/>
    </location>
</feature>
<feature type="topological domain" description="Cytoplasmic" evidence="1">
    <location>
        <begin position="1"/>
        <end position="27"/>
    </location>
</feature>
<feature type="transmembrane region" description="Helical; Name=TM1" evidence="1">
    <location>
        <begin position="28"/>
        <end position="46"/>
    </location>
</feature>
<feature type="topological domain" description="Extracellular" evidence="1">
    <location>
        <begin position="47"/>
        <end position="86"/>
    </location>
</feature>
<feature type="transmembrane region" description="Helical; Name=TM2" evidence="1">
    <location>
        <begin position="87"/>
        <end position="112"/>
    </location>
</feature>
<feature type="topological domain" description="Cytoplasmic" evidence="1">
    <location>
        <begin position="113"/>
        <end position="116"/>
    </location>
</feature>
<feature type="transmembrane region" description="Helical; Name=TM3" evidence="1">
    <location>
        <begin position="117"/>
        <end position="139"/>
    </location>
</feature>
<feature type="topological domain" description="Extracellular" evidence="1">
    <location>
        <begin position="140"/>
        <end position="144"/>
    </location>
</feature>
<feature type="transmembrane region" description="Helical; Name=TM4" evidence="1">
    <location>
        <begin position="145"/>
        <end position="158"/>
    </location>
</feature>
<feature type="topological domain" description="Cytoplasmic" evidence="1">
    <location>
        <begin position="159"/>
        <end position="181"/>
    </location>
</feature>
<feature type="transmembrane region" description="Helical; Name=TM5" evidence="1">
    <location>
        <begin position="182"/>
        <end position="207"/>
    </location>
</feature>
<feature type="topological domain" description="Extracellular" evidence="1">
    <location>
        <begin position="208"/>
        <end position="212"/>
    </location>
</feature>
<feature type="transmembrane region" description="Helical; Name=TM6" evidence="1">
    <location>
        <begin position="213"/>
        <end position="231"/>
    </location>
</feature>
<feature type="topological domain" description="Cytoplasmic" evidence="1">
    <location>
        <begin position="232"/>
        <end position="270"/>
    </location>
</feature>
<feature type="transmembrane region" description="Helical; Name=TM7" evidence="1">
    <location>
        <begin position="271"/>
        <end position="293"/>
    </location>
</feature>
<feature type="topological domain" description="Extracellular" evidence="1">
    <location>
        <begin position="294"/>
        <end position="306"/>
    </location>
</feature>
<feature type="transmembrane region" description="Helical; Name=TM8" evidence="1">
    <location>
        <begin position="307"/>
        <end position="329"/>
    </location>
</feature>
<feature type="topological domain" description="Cytoplasmic" evidence="1">
    <location>
        <begin position="330"/>
        <end position="335"/>
    </location>
</feature>
<feature type="transmembrane region" description="Helical; Name=TM9" evidence="1">
    <location>
        <begin position="336"/>
        <end position="355"/>
    </location>
</feature>
<feature type="topological domain" description="Extracellular" evidence="1">
    <location>
        <begin position="356"/>
        <end position="359"/>
    </location>
</feature>
<feature type="transmembrane region" description="Helical; Name=TM10" evidence="1">
    <location>
        <begin position="360"/>
        <end position="380"/>
    </location>
</feature>
<feature type="topological domain" description="Cytoplasmic" evidence="1">
    <location>
        <begin position="381"/>
        <end position="392"/>
    </location>
</feature>
<feature type="transmembrane region" description="Helical; Name=TM11" evidence="1">
    <location>
        <begin position="393"/>
        <end position="418"/>
    </location>
</feature>
<feature type="topological domain" description="Extracellular" evidence="1">
    <location>
        <begin position="419"/>
        <end position="426"/>
    </location>
</feature>
<feature type="transmembrane region" description="Helical; Name=TM12" evidence="1">
    <location>
        <begin position="427"/>
        <end position="445"/>
    </location>
</feature>
<feature type="topological domain" description="Cytoplasmic" evidence="1">
    <location>
        <begin position="446"/>
        <end position="463"/>
    </location>
</feature>
<feature type="binding site" description="reversibly protonated residue during proton transport" evidence="3">
    <location>
        <position position="160"/>
    </location>
    <ligand>
        <name>H(+)</name>
        <dbReference type="ChEBI" id="CHEBI:15378"/>
    </ligand>
</feature>
<feature type="binding site" description="reversibly protonated residue during proton transport" evidence="3">
    <location>
        <position position="189"/>
    </location>
    <ligand>
        <name>H(+)</name>
        <dbReference type="ChEBI" id="CHEBI:15378"/>
    </ligand>
</feature>
<feature type="binding site" description="reversibly protonated residue during proton transport" evidence="3">
    <location>
        <position position="285"/>
    </location>
    <ligand>
        <name>H(+)</name>
        <dbReference type="ChEBI" id="CHEBI:15378"/>
    </ligand>
</feature>
<feature type="glycosylation site" description="N-linked (GlcNAc...) asparagine" evidence="4">
    <location>
        <position position="60"/>
    </location>
</feature>
<feature type="glycosylation site" description="N-linked (GlcNAc...) asparagine" evidence="4">
    <location>
        <position position="70"/>
    </location>
</feature>
<feature type="disulfide bond" evidence="1">
    <location>
        <begin position="67"/>
        <end position="302"/>
    </location>
</feature>
<gene>
    <name evidence="3" type="primary">slc46a1</name>
    <name evidence="6" type="synonym">hcp1</name>
    <name type="synonym">pcft</name>
</gene>
<name>PCFT_XENLA</name>
<comment type="function">
    <text evidence="3 5">Proton-coupled folate symporter that mediates folate absorption using an H(+) gradient as a driving force (By similarity). Involved in the intestinal absorption of folates at the brush-border membrane of the proximal jejunum, and the transport from blood to cerebrospinal fluid across the choroid plexus (By similarity). Functions at acidic pH via alternate outward- and inward-open conformation states (By similarity). Protonation of residues in the outward open state primes the protein for transport (By similarity). Binding of folate promotes breaking of salt bridge network and subsequent closure of the extracellular gate, leading to the inward-open state and release of protons and folate (By similarity). Also able to transport antifolate drugs, such as methotrexate and pemetrexed (By similarity). Also acts as a lower-affinity, pH-independent heme carrier protein and constitutes the main importer of heme in the intestine (PubMed:16143108). Imports heme in the retina and retinal pigment epithelium, in neurons of the hippocampus, in hepatocytes and in the renal epithelial cells (By similarity).</text>
</comment>
<comment type="catalytic activity">
    <reaction evidence="3">
        <text>folate(in) + H(+)(in) = folate(out) + H(+)(out)</text>
        <dbReference type="Rhea" id="RHEA:70159"/>
        <dbReference type="ChEBI" id="CHEBI:15378"/>
        <dbReference type="ChEBI" id="CHEBI:62501"/>
    </reaction>
</comment>
<comment type="catalytic activity">
    <reaction evidence="2">
        <text>(6S)-5-methyl-5,6,7,8-tetrahydrofolate(in) + H(+)(in) = (6S)-5-methyl-5,6,7,8-tetrahydrofolate(out) + H(+)(out)</text>
        <dbReference type="Rhea" id="RHEA:70167"/>
        <dbReference type="ChEBI" id="CHEBI:15378"/>
        <dbReference type="ChEBI" id="CHEBI:18608"/>
    </reaction>
</comment>
<comment type="catalytic activity">
    <reaction evidence="3">
        <text>methotrexate(in) + H(+)(in) = methotrexate(out) + H(+)(out)</text>
        <dbReference type="Rhea" id="RHEA:70163"/>
        <dbReference type="ChEBI" id="CHEBI:15378"/>
        <dbReference type="ChEBI" id="CHEBI:50681"/>
    </reaction>
</comment>
<comment type="catalytic activity">
    <reaction evidence="3">
        <text>pemetrexed(in) + H(+)(in) = pemetrexed(out) + H(+)(out)</text>
        <dbReference type="Rhea" id="RHEA:70171"/>
        <dbReference type="ChEBI" id="CHEBI:15378"/>
        <dbReference type="ChEBI" id="CHEBI:63724"/>
    </reaction>
</comment>
<comment type="subunit">
    <text evidence="1">Monomer.</text>
</comment>
<comment type="subcellular location">
    <subcellularLocation>
        <location evidence="3">Cell membrane</location>
        <topology evidence="4">Multi-pass membrane protein</topology>
    </subcellularLocation>
    <subcellularLocation>
        <location evidence="3">Apical cell membrane</location>
        <topology evidence="4">Multi-pass membrane protein</topology>
    </subcellularLocation>
    <subcellularLocation>
        <location evidence="3">Basolateral cell membrane</location>
        <topology evidence="4">Multi-pass membrane protein</topology>
    </subcellularLocation>
    <subcellularLocation>
        <location evidence="3">Endosome membrane</location>
        <topology evidence="4">Multi-pass membrane protein</topology>
    </subcellularLocation>
    <subcellularLocation>
        <location evidence="2">Cytoplasm</location>
    </subcellularLocation>
    <text evidence="2">Localizes to the apical membrane of intestinal cells in iron-deficient cells, while it resides in the cytoplasm in iron-replete cells (By similarity). Localizes to the basolateral membrane of choroid plexus (By similarity).</text>
</comment>
<comment type="similarity">
    <text evidence="7">Belongs to the major facilitator superfamily. SLC46A family.</text>
</comment>
<protein>
    <recommendedName>
        <fullName evidence="3">Proton-coupled folate transporter</fullName>
    </recommendedName>
    <alternativeName>
        <fullName evidence="6">Heme carrier protein 1</fullName>
    </alternativeName>
    <alternativeName>
        <fullName evidence="7">Solute carrier family 46 member 1</fullName>
    </alternativeName>
</protein>
<reference key="1">
    <citation type="submission" date="2004-07" db="EMBL/GenBank/DDBJ databases">
        <authorList>
            <consortium name="NIH - Xenopus Gene Collection (XGC) project"/>
        </authorList>
    </citation>
    <scope>NUCLEOTIDE SEQUENCE [LARGE SCALE MRNA]</scope>
    <source>
        <tissue>Embryo</tissue>
    </source>
</reference>
<reference key="2">
    <citation type="journal article" date="2005" name="Cell">
        <title>Identification of an intestinal heme transporter.</title>
        <authorList>
            <person name="Shayeghi M."/>
            <person name="Latunde-Dada G.O."/>
            <person name="Oakhill J.S."/>
            <person name="Laftah A.H."/>
            <person name="Takeuchi K."/>
            <person name="Halliday N."/>
            <person name="Khan Y."/>
            <person name="Warley A."/>
            <person name="McCann F.E."/>
            <person name="Hider R.C."/>
            <person name="Frazer D.M."/>
            <person name="Anderson G.J."/>
            <person name="Vulpe C.D."/>
            <person name="Simpson R.J."/>
            <person name="McKie A.T."/>
        </authorList>
    </citation>
    <scope>FUNCTION</scope>
</reference>
<dbReference type="EMBL" id="BC077859">
    <property type="protein sequence ID" value="AAH77859.1"/>
    <property type="molecule type" value="mRNA"/>
</dbReference>
<dbReference type="RefSeq" id="NP_001086984.2">
    <property type="nucleotide sequence ID" value="NM_001093515.1"/>
</dbReference>
<dbReference type="SMR" id="Q6DCX5"/>
<dbReference type="GlyCosmos" id="Q6DCX5">
    <property type="glycosylation" value="2 sites, No reported glycans"/>
</dbReference>
<dbReference type="DNASU" id="446819"/>
<dbReference type="GeneID" id="446819"/>
<dbReference type="KEGG" id="xla:446819"/>
<dbReference type="AGR" id="Xenbase:XB-GENE-961471"/>
<dbReference type="CTD" id="446819"/>
<dbReference type="Xenbase" id="XB-GENE-961471">
    <property type="gene designation" value="slc46a1.L"/>
</dbReference>
<dbReference type="OrthoDB" id="419734at2759"/>
<dbReference type="Proteomes" id="UP000186698">
    <property type="component" value="Chromosome 2L"/>
</dbReference>
<dbReference type="Bgee" id="446819">
    <property type="expression patterns" value="Expressed in kidney and 19 other cell types or tissues"/>
</dbReference>
<dbReference type="GO" id="GO:0016324">
    <property type="term" value="C:apical plasma membrane"/>
    <property type="evidence" value="ECO:0007669"/>
    <property type="project" value="UniProtKB-SubCell"/>
</dbReference>
<dbReference type="GO" id="GO:0016323">
    <property type="term" value="C:basolateral plasma membrane"/>
    <property type="evidence" value="ECO:0000250"/>
    <property type="project" value="UniProtKB"/>
</dbReference>
<dbReference type="GO" id="GO:0005768">
    <property type="term" value="C:endosome"/>
    <property type="evidence" value="ECO:0000250"/>
    <property type="project" value="UniProtKB"/>
</dbReference>
<dbReference type="GO" id="GO:0010008">
    <property type="term" value="C:endosome membrane"/>
    <property type="evidence" value="ECO:0007669"/>
    <property type="project" value="UniProtKB-SubCell"/>
</dbReference>
<dbReference type="GO" id="GO:0005886">
    <property type="term" value="C:plasma membrane"/>
    <property type="evidence" value="ECO:0000318"/>
    <property type="project" value="GO_Central"/>
</dbReference>
<dbReference type="GO" id="GO:0005542">
    <property type="term" value="F:folic acid binding"/>
    <property type="evidence" value="ECO:0007669"/>
    <property type="project" value="UniProtKB-KW"/>
</dbReference>
<dbReference type="GO" id="GO:0015350">
    <property type="term" value="F:methotrexate transmembrane transporter activity"/>
    <property type="evidence" value="ECO:0000250"/>
    <property type="project" value="UniProtKB"/>
</dbReference>
<dbReference type="GO" id="GO:0015293">
    <property type="term" value="F:symporter activity"/>
    <property type="evidence" value="ECO:0000250"/>
    <property type="project" value="UniProtKB"/>
</dbReference>
<dbReference type="GO" id="GO:0022857">
    <property type="term" value="F:transmembrane transporter activity"/>
    <property type="evidence" value="ECO:0000318"/>
    <property type="project" value="GO_Central"/>
</dbReference>
<dbReference type="GO" id="GO:0055085">
    <property type="term" value="P:transmembrane transport"/>
    <property type="evidence" value="ECO:0000318"/>
    <property type="project" value="GO_Central"/>
</dbReference>
<dbReference type="CDD" id="cd17449">
    <property type="entry name" value="MFS_SLC46A1_PCFT"/>
    <property type="match status" value="1"/>
</dbReference>
<dbReference type="Gene3D" id="1.20.1250.20">
    <property type="entry name" value="MFS general substrate transporter like domains"/>
    <property type="match status" value="1"/>
</dbReference>
<dbReference type="InterPro" id="IPR011701">
    <property type="entry name" value="MFS"/>
</dbReference>
<dbReference type="InterPro" id="IPR036259">
    <property type="entry name" value="MFS_trans_sf"/>
</dbReference>
<dbReference type="PANTHER" id="PTHR23507:SF2">
    <property type="entry name" value="PROTON-COUPLED FOLATE TRANSPORTER"/>
    <property type="match status" value="1"/>
</dbReference>
<dbReference type="PANTHER" id="PTHR23507">
    <property type="entry name" value="ZGC:174356"/>
    <property type="match status" value="1"/>
</dbReference>
<dbReference type="Pfam" id="PF07690">
    <property type="entry name" value="MFS_1"/>
    <property type="match status" value="1"/>
</dbReference>
<dbReference type="SUPFAM" id="SSF103473">
    <property type="entry name" value="MFS general substrate transporter"/>
    <property type="match status" value="1"/>
</dbReference>
<proteinExistence type="evidence at transcript level"/>
<keyword id="KW-1003">Cell membrane</keyword>
<keyword id="KW-0963">Cytoplasm</keyword>
<keyword id="KW-1015">Disulfide bond</keyword>
<keyword id="KW-0967">Endosome</keyword>
<keyword id="KW-0290">Folate-binding</keyword>
<keyword id="KW-0325">Glycoprotein</keyword>
<keyword id="KW-0472">Membrane</keyword>
<keyword id="KW-1185">Reference proteome</keyword>
<keyword id="KW-0769">Symport</keyword>
<keyword id="KW-0812">Transmembrane</keyword>
<keyword id="KW-1133">Transmembrane helix</keyword>
<keyword id="KW-0813">Transport</keyword>
<accession>Q6DCX5</accession>